<feature type="chain" id="PRO_1000134705" description="3-hydroxyacyl-[acyl-carrier-protein] dehydratase FabZ">
    <location>
        <begin position="1"/>
        <end position="159"/>
    </location>
</feature>
<feature type="active site" evidence="1">
    <location>
        <position position="62"/>
    </location>
</feature>
<protein>
    <recommendedName>
        <fullName evidence="1">3-hydroxyacyl-[acyl-carrier-protein] dehydratase FabZ</fullName>
        <ecNumber evidence="1">4.2.1.59</ecNumber>
    </recommendedName>
    <alternativeName>
        <fullName evidence="1">(3R)-hydroxymyristoyl-[acyl-carrier-protein] dehydratase</fullName>
        <shortName evidence="1">(3R)-hydroxymyristoyl-ACP dehydrase</shortName>
    </alternativeName>
    <alternativeName>
        <fullName evidence="1">Beta-hydroxyacyl-ACP dehydratase</fullName>
    </alternativeName>
</protein>
<keyword id="KW-0963">Cytoplasm</keyword>
<keyword id="KW-0441">Lipid A biosynthesis</keyword>
<keyword id="KW-0444">Lipid biosynthesis</keyword>
<keyword id="KW-0443">Lipid metabolism</keyword>
<keyword id="KW-0456">Lyase</keyword>
<keyword id="KW-1185">Reference proteome</keyword>
<gene>
    <name evidence="1" type="primary">fabZ</name>
    <name type="ordered locus">Mnod_1529</name>
</gene>
<sequence length="159" mass="17765">MEPDAMTETPTELGTADIMRVMELLPHRYPFLLVDRITAINGDDSCIGIKNVTINEPQFTGHFPAMPVFPGVLLVEGMAQTAGAICCAHKLQNNTKPSRVYLMTIDKVKFRKPVVPGDTVEYHMKKVSNRRFMWWFRGEAKVNGVLVAEAEIGAMLVTE</sequence>
<name>FABZ_METNO</name>
<comment type="function">
    <text evidence="1">Involved in unsaturated fatty acids biosynthesis. Catalyzes the dehydration of short chain beta-hydroxyacyl-ACPs and long chain saturated and unsaturated beta-hydroxyacyl-ACPs.</text>
</comment>
<comment type="catalytic activity">
    <reaction evidence="1">
        <text>a (3R)-hydroxyacyl-[ACP] = a (2E)-enoyl-[ACP] + H2O</text>
        <dbReference type="Rhea" id="RHEA:13097"/>
        <dbReference type="Rhea" id="RHEA-COMP:9925"/>
        <dbReference type="Rhea" id="RHEA-COMP:9945"/>
        <dbReference type="ChEBI" id="CHEBI:15377"/>
        <dbReference type="ChEBI" id="CHEBI:78784"/>
        <dbReference type="ChEBI" id="CHEBI:78827"/>
        <dbReference type="EC" id="4.2.1.59"/>
    </reaction>
</comment>
<comment type="subcellular location">
    <subcellularLocation>
        <location evidence="1">Cytoplasm</location>
    </subcellularLocation>
</comment>
<comment type="similarity">
    <text evidence="1">Belongs to the thioester dehydratase family. FabZ subfamily.</text>
</comment>
<proteinExistence type="inferred from homology"/>
<dbReference type="EC" id="4.2.1.59" evidence="1"/>
<dbReference type="EMBL" id="CP001349">
    <property type="protein sequence ID" value="ACL56521.1"/>
    <property type="molecule type" value="Genomic_DNA"/>
</dbReference>
<dbReference type="SMR" id="B8INJ5"/>
<dbReference type="STRING" id="460265.Mnod_1529"/>
<dbReference type="KEGG" id="mno:Mnod_1529"/>
<dbReference type="eggNOG" id="COG0764">
    <property type="taxonomic scope" value="Bacteria"/>
</dbReference>
<dbReference type="HOGENOM" id="CLU_078912_1_2_5"/>
<dbReference type="OrthoDB" id="9772788at2"/>
<dbReference type="Proteomes" id="UP000008207">
    <property type="component" value="Chromosome"/>
</dbReference>
<dbReference type="GO" id="GO:0005737">
    <property type="term" value="C:cytoplasm"/>
    <property type="evidence" value="ECO:0007669"/>
    <property type="project" value="UniProtKB-SubCell"/>
</dbReference>
<dbReference type="GO" id="GO:0016020">
    <property type="term" value="C:membrane"/>
    <property type="evidence" value="ECO:0007669"/>
    <property type="project" value="GOC"/>
</dbReference>
<dbReference type="GO" id="GO:0019171">
    <property type="term" value="F:(3R)-hydroxyacyl-[acyl-carrier-protein] dehydratase activity"/>
    <property type="evidence" value="ECO:0007669"/>
    <property type="project" value="UniProtKB-EC"/>
</dbReference>
<dbReference type="GO" id="GO:0006633">
    <property type="term" value="P:fatty acid biosynthetic process"/>
    <property type="evidence" value="ECO:0007669"/>
    <property type="project" value="UniProtKB-UniRule"/>
</dbReference>
<dbReference type="GO" id="GO:0009245">
    <property type="term" value="P:lipid A biosynthetic process"/>
    <property type="evidence" value="ECO:0007669"/>
    <property type="project" value="UniProtKB-UniRule"/>
</dbReference>
<dbReference type="CDD" id="cd01288">
    <property type="entry name" value="FabZ"/>
    <property type="match status" value="1"/>
</dbReference>
<dbReference type="FunFam" id="3.10.129.10:FF:000001">
    <property type="entry name" value="3-hydroxyacyl-[acyl-carrier-protein] dehydratase FabZ"/>
    <property type="match status" value="1"/>
</dbReference>
<dbReference type="Gene3D" id="3.10.129.10">
    <property type="entry name" value="Hotdog Thioesterase"/>
    <property type="match status" value="1"/>
</dbReference>
<dbReference type="HAMAP" id="MF_00406">
    <property type="entry name" value="FabZ"/>
    <property type="match status" value="1"/>
</dbReference>
<dbReference type="InterPro" id="IPR013114">
    <property type="entry name" value="FabA_FabZ"/>
</dbReference>
<dbReference type="InterPro" id="IPR010084">
    <property type="entry name" value="FabZ"/>
</dbReference>
<dbReference type="InterPro" id="IPR029069">
    <property type="entry name" value="HotDog_dom_sf"/>
</dbReference>
<dbReference type="NCBIfam" id="TIGR01750">
    <property type="entry name" value="fabZ"/>
    <property type="match status" value="1"/>
</dbReference>
<dbReference type="NCBIfam" id="NF000582">
    <property type="entry name" value="PRK00006.1"/>
    <property type="match status" value="1"/>
</dbReference>
<dbReference type="PANTHER" id="PTHR30272">
    <property type="entry name" value="3-HYDROXYACYL-[ACYL-CARRIER-PROTEIN] DEHYDRATASE"/>
    <property type="match status" value="1"/>
</dbReference>
<dbReference type="PANTHER" id="PTHR30272:SF1">
    <property type="entry name" value="3-HYDROXYACYL-[ACYL-CARRIER-PROTEIN] DEHYDRATASE"/>
    <property type="match status" value="1"/>
</dbReference>
<dbReference type="Pfam" id="PF07977">
    <property type="entry name" value="FabA"/>
    <property type="match status" value="1"/>
</dbReference>
<dbReference type="SUPFAM" id="SSF54637">
    <property type="entry name" value="Thioesterase/thiol ester dehydrase-isomerase"/>
    <property type="match status" value="1"/>
</dbReference>
<accession>B8INJ5</accession>
<evidence type="ECO:0000255" key="1">
    <source>
        <dbReference type="HAMAP-Rule" id="MF_00406"/>
    </source>
</evidence>
<reference key="1">
    <citation type="submission" date="2009-01" db="EMBL/GenBank/DDBJ databases">
        <title>Complete sequence of chromosome of Methylobacterium nodulans ORS 2060.</title>
        <authorList>
            <consortium name="US DOE Joint Genome Institute"/>
            <person name="Lucas S."/>
            <person name="Copeland A."/>
            <person name="Lapidus A."/>
            <person name="Glavina del Rio T."/>
            <person name="Dalin E."/>
            <person name="Tice H."/>
            <person name="Bruce D."/>
            <person name="Goodwin L."/>
            <person name="Pitluck S."/>
            <person name="Sims D."/>
            <person name="Brettin T."/>
            <person name="Detter J.C."/>
            <person name="Han C."/>
            <person name="Larimer F."/>
            <person name="Land M."/>
            <person name="Hauser L."/>
            <person name="Kyrpides N."/>
            <person name="Ivanova N."/>
            <person name="Marx C.J."/>
            <person name="Richardson P."/>
        </authorList>
    </citation>
    <scope>NUCLEOTIDE SEQUENCE [LARGE SCALE GENOMIC DNA]</scope>
    <source>
        <strain>LMG 21967 / CNCM I-2342 / ORS 2060</strain>
    </source>
</reference>
<organism>
    <name type="scientific">Methylobacterium nodulans (strain LMG 21967 / CNCM I-2342 / ORS 2060)</name>
    <dbReference type="NCBI Taxonomy" id="460265"/>
    <lineage>
        <taxon>Bacteria</taxon>
        <taxon>Pseudomonadati</taxon>
        <taxon>Pseudomonadota</taxon>
        <taxon>Alphaproteobacteria</taxon>
        <taxon>Hyphomicrobiales</taxon>
        <taxon>Methylobacteriaceae</taxon>
        <taxon>Methylobacterium</taxon>
    </lineage>
</organism>